<dbReference type="EMBL" id="CP000812">
    <property type="protein sequence ID" value="ABV34212.1"/>
    <property type="molecule type" value="Genomic_DNA"/>
</dbReference>
<dbReference type="RefSeq" id="WP_012003688.1">
    <property type="nucleotide sequence ID" value="NZ_BSDV01000001.1"/>
</dbReference>
<dbReference type="SMR" id="A8F7S8"/>
<dbReference type="STRING" id="416591.Tlet_1658"/>
<dbReference type="KEGG" id="tle:Tlet_1658"/>
<dbReference type="eggNOG" id="COG0227">
    <property type="taxonomic scope" value="Bacteria"/>
</dbReference>
<dbReference type="HOGENOM" id="CLU_064548_7_0_0"/>
<dbReference type="OrthoDB" id="9805609at2"/>
<dbReference type="Proteomes" id="UP000002016">
    <property type="component" value="Chromosome"/>
</dbReference>
<dbReference type="GO" id="GO:1990904">
    <property type="term" value="C:ribonucleoprotein complex"/>
    <property type="evidence" value="ECO:0007669"/>
    <property type="project" value="UniProtKB-KW"/>
</dbReference>
<dbReference type="GO" id="GO:0005840">
    <property type="term" value="C:ribosome"/>
    <property type="evidence" value="ECO:0007669"/>
    <property type="project" value="UniProtKB-KW"/>
</dbReference>
<dbReference type="GO" id="GO:0003735">
    <property type="term" value="F:structural constituent of ribosome"/>
    <property type="evidence" value="ECO:0007669"/>
    <property type="project" value="InterPro"/>
</dbReference>
<dbReference type="GO" id="GO:0006412">
    <property type="term" value="P:translation"/>
    <property type="evidence" value="ECO:0007669"/>
    <property type="project" value="UniProtKB-UniRule"/>
</dbReference>
<dbReference type="Gene3D" id="2.30.170.40">
    <property type="entry name" value="Ribosomal protein L28/L24"/>
    <property type="match status" value="1"/>
</dbReference>
<dbReference type="HAMAP" id="MF_00373">
    <property type="entry name" value="Ribosomal_bL28"/>
    <property type="match status" value="1"/>
</dbReference>
<dbReference type="InterPro" id="IPR050096">
    <property type="entry name" value="Bacterial_rp_bL28"/>
</dbReference>
<dbReference type="InterPro" id="IPR026569">
    <property type="entry name" value="Ribosomal_bL28"/>
</dbReference>
<dbReference type="InterPro" id="IPR034704">
    <property type="entry name" value="Ribosomal_bL28/bL31-like_sf"/>
</dbReference>
<dbReference type="InterPro" id="IPR001383">
    <property type="entry name" value="Ribosomal_bL28_bact-type"/>
</dbReference>
<dbReference type="InterPro" id="IPR037147">
    <property type="entry name" value="Ribosomal_bL28_sf"/>
</dbReference>
<dbReference type="NCBIfam" id="TIGR00009">
    <property type="entry name" value="L28"/>
    <property type="match status" value="1"/>
</dbReference>
<dbReference type="PANTHER" id="PTHR39080">
    <property type="entry name" value="50S RIBOSOMAL PROTEIN L28"/>
    <property type="match status" value="1"/>
</dbReference>
<dbReference type="PANTHER" id="PTHR39080:SF1">
    <property type="entry name" value="LARGE RIBOSOMAL SUBUNIT PROTEIN BL28A"/>
    <property type="match status" value="1"/>
</dbReference>
<dbReference type="Pfam" id="PF00830">
    <property type="entry name" value="Ribosomal_L28"/>
    <property type="match status" value="1"/>
</dbReference>
<dbReference type="SUPFAM" id="SSF143800">
    <property type="entry name" value="L28p-like"/>
    <property type="match status" value="1"/>
</dbReference>
<feature type="chain" id="PRO_1000059958" description="Large ribosomal subunit protein bL28">
    <location>
        <begin position="1"/>
        <end position="65"/>
    </location>
</feature>
<keyword id="KW-1185">Reference proteome</keyword>
<keyword id="KW-0687">Ribonucleoprotein</keyword>
<keyword id="KW-0689">Ribosomal protein</keyword>
<evidence type="ECO:0000255" key="1">
    <source>
        <dbReference type="HAMAP-Rule" id="MF_00373"/>
    </source>
</evidence>
<evidence type="ECO:0000305" key="2"/>
<name>RL28_PSELT</name>
<reference key="1">
    <citation type="submission" date="2007-08" db="EMBL/GenBank/DDBJ databases">
        <title>Complete sequence of Thermotoga lettingae TMO.</title>
        <authorList>
            <consortium name="US DOE Joint Genome Institute"/>
            <person name="Copeland A."/>
            <person name="Lucas S."/>
            <person name="Lapidus A."/>
            <person name="Barry K."/>
            <person name="Glavina del Rio T."/>
            <person name="Dalin E."/>
            <person name="Tice H."/>
            <person name="Pitluck S."/>
            <person name="Foster B."/>
            <person name="Bruce D."/>
            <person name="Schmutz J."/>
            <person name="Larimer F."/>
            <person name="Land M."/>
            <person name="Hauser L."/>
            <person name="Kyrpides N."/>
            <person name="Mikhailova N."/>
            <person name="Nelson K."/>
            <person name="Gogarten J.P."/>
            <person name="Noll K."/>
            <person name="Richardson P."/>
        </authorList>
    </citation>
    <scope>NUCLEOTIDE SEQUENCE [LARGE SCALE GENOMIC DNA]</scope>
    <source>
        <strain>ATCC BAA-301 / DSM 14385 / NBRC 107922 / TMO</strain>
    </source>
</reference>
<gene>
    <name evidence="1" type="primary">rpmB</name>
    <name type="ordered locus">Tlet_1658</name>
</gene>
<proteinExistence type="inferred from homology"/>
<organism>
    <name type="scientific">Pseudothermotoga lettingae (strain ATCC BAA-301 / DSM 14385 / NBRC 107922 / TMO)</name>
    <name type="common">Thermotoga lettingae</name>
    <dbReference type="NCBI Taxonomy" id="416591"/>
    <lineage>
        <taxon>Bacteria</taxon>
        <taxon>Thermotogati</taxon>
        <taxon>Thermotogota</taxon>
        <taxon>Thermotogae</taxon>
        <taxon>Thermotogales</taxon>
        <taxon>Thermotogaceae</taxon>
        <taxon>Pseudothermotoga</taxon>
    </lineage>
</organism>
<accession>A8F7S8</accession>
<sequence length="65" mass="7297">MAKRCEICGKGPVAGKNVSHSNRHTRRMFRPNLQKIRVITEDGTVRTMRVCTRCLKAGKVQKATA</sequence>
<comment type="similarity">
    <text evidence="1">Belongs to the bacterial ribosomal protein bL28 family.</text>
</comment>
<protein>
    <recommendedName>
        <fullName evidence="1">Large ribosomal subunit protein bL28</fullName>
    </recommendedName>
    <alternativeName>
        <fullName evidence="2">50S ribosomal protein L28</fullName>
    </alternativeName>
</protein>